<keyword id="KW-0472">Membrane</keyword>
<keyword id="KW-0496">Mitochondrion</keyword>
<keyword id="KW-0653">Protein transport</keyword>
<keyword id="KW-1267">Proteomics identification</keyword>
<keyword id="KW-1185">Reference proteome</keyword>
<keyword id="KW-0809">Transit peptide</keyword>
<keyword id="KW-0811">Translocation</keyword>
<keyword id="KW-0812">Transmembrane</keyword>
<keyword id="KW-1133">Transmembrane helix</keyword>
<keyword id="KW-0813">Transport</keyword>
<feature type="transit peptide" description="Mitochondrion" evidence="1">
    <location>
        <begin position="1"/>
        <end position="18"/>
    </location>
</feature>
<feature type="chain" id="PRO_0000043228" description="Mitochondrial import inner membrane translocase subunit Tim21">
    <location>
        <begin position="19"/>
        <end position="248"/>
    </location>
</feature>
<feature type="transmembrane region" description="Helical" evidence="1">
    <location>
        <begin position="108"/>
        <end position="128"/>
    </location>
</feature>
<feature type="region of interest" description="Disordered" evidence="2">
    <location>
        <begin position="67"/>
        <end position="98"/>
    </location>
</feature>
<feature type="sequence variant" id="VAR_052306" description="In dbSNP:rs3737512.">
    <original>G</original>
    <variation>S</variation>
    <location>
        <position position="79"/>
    </location>
</feature>
<feature type="sequence conflict" description="In Ref. 1; AAF29118." evidence="5" ref="1">
    <original>C</original>
    <variation>Y</variation>
    <location>
        <position position="34"/>
    </location>
</feature>
<comment type="function">
    <text evidence="3">Participates in the translocation of transit peptide-containing proteins across the mitochondrial inner membrane. Also required for assembly of mitochondrial respiratory chain complex I and complex IV as component of the MITRAC (mitochondrial translation regulation assembly intermediate of cytochrome c oxidase complex) complex. Probably shuttles between the presequence translocase and respiratory-chain assembly intermediates in a process that promotes incorporation of early nuclear-encoded subunits into these complexes.</text>
</comment>
<comment type="subunit">
    <text evidence="3 4 6">Component of the TIM23 complex. Component of the MITRAC (mitochondrial translation regulation assembly intermediate of cytochrome c oxidase complex) complex, the core components of this complex being COA3/MITRAC12 and COX14 (Probable) (PubMed:23260140). Interacts with COA3 and MT-CO1/COX1 (PubMed:26321642).</text>
</comment>
<comment type="interaction">
    <interactant intactId="EBI-6570759">
        <id>Q9BVV7</id>
    </interactant>
    <interactant intactId="EBI-2117234">
        <id>P00395</id>
        <label>MT-CO1</label>
    </interactant>
    <organismsDiffer>false</organismsDiffer>
    <experiments>3</experiments>
</comment>
<comment type="interaction">
    <interactant intactId="EBI-6570759">
        <id>Q9BVV7</id>
    </interactant>
    <interactant intactId="EBI-1047996">
        <id>O14925</id>
        <label>TIMM23</label>
    </interactant>
    <organismsDiffer>false</organismsDiffer>
    <experiments>3</experiments>
</comment>
<comment type="interaction">
    <interactant intactId="EBI-6570759">
        <id>Q9BVV7</id>
    </interactant>
    <interactant intactId="EBI-947187">
        <id>Q9UHD9</id>
        <label>UBQLN2</label>
    </interactant>
    <organismsDiffer>false</organismsDiffer>
    <experiments>3</experiments>
</comment>
<comment type="subcellular location">
    <subcellularLocation>
        <location evidence="5">Mitochondrion membrane</location>
        <topology evidence="5">Single-pass membrane protein</topology>
    </subcellularLocation>
</comment>
<comment type="similarity">
    <text evidence="5">Belongs to the TIM21 family.</text>
</comment>
<reference key="1">
    <citation type="journal article" date="2000" name="Genome Res.">
        <title>Cloning and functional analysis of cDNAs with open reading frames for 300 previously undefined genes expressed in CD34+ hematopoietic stem/progenitor cells.</title>
        <authorList>
            <person name="Zhang Q.-H."/>
            <person name="Ye M."/>
            <person name="Wu X.-Y."/>
            <person name="Ren S.-X."/>
            <person name="Zhao M."/>
            <person name="Zhao C.-J."/>
            <person name="Fu G."/>
            <person name="Shen Y."/>
            <person name="Fan H.-Y."/>
            <person name="Lu G."/>
            <person name="Zhong M."/>
            <person name="Xu X.-R."/>
            <person name="Han Z.-G."/>
            <person name="Zhang J.-W."/>
            <person name="Tao J."/>
            <person name="Huang Q.-H."/>
            <person name="Zhou J."/>
            <person name="Hu G.-X."/>
            <person name="Gu J."/>
            <person name="Chen S.-J."/>
            <person name="Chen Z."/>
        </authorList>
    </citation>
    <scope>NUCLEOTIDE SEQUENCE [LARGE SCALE MRNA]</scope>
    <source>
        <tissue>Umbilical cord blood</tissue>
    </source>
</reference>
<reference key="2">
    <citation type="journal article" date="2004" name="Genome Res.">
        <title>The status, quality, and expansion of the NIH full-length cDNA project: the Mammalian Gene Collection (MGC).</title>
        <authorList>
            <consortium name="The MGC Project Team"/>
        </authorList>
    </citation>
    <scope>NUCLEOTIDE SEQUENCE [LARGE SCALE MRNA]</scope>
    <source>
        <tissue>Cervix carcinoma</tissue>
    </source>
</reference>
<reference key="3">
    <citation type="journal article" date="2011" name="BMC Syst. Biol.">
        <title>Initial characterization of the human central proteome.</title>
        <authorList>
            <person name="Burkard T.R."/>
            <person name="Planyavsky M."/>
            <person name="Kaupe I."/>
            <person name="Breitwieser F.P."/>
            <person name="Buerckstuemmer T."/>
            <person name="Bennett K.L."/>
            <person name="Superti-Furga G."/>
            <person name="Colinge J."/>
        </authorList>
    </citation>
    <scope>IDENTIFICATION BY MASS SPECTROMETRY [LARGE SCALE ANALYSIS]</scope>
</reference>
<reference key="4">
    <citation type="journal article" date="2012" name="Cell">
        <title>MITRAC links mitochondrial protein translocation to respiratory-chain assembly and translational regulation.</title>
        <authorList>
            <person name="Mick D.U."/>
            <person name="Dennerlein S."/>
            <person name="Wiese H."/>
            <person name="Reinhold R."/>
            <person name="Pacheu-Grau D."/>
            <person name="Lorenzi I."/>
            <person name="Sasarman F."/>
            <person name="Weraarpachai W."/>
            <person name="Shoubridge E.A."/>
            <person name="Warscheid B."/>
            <person name="Rehling P."/>
        </authorList>
    </citation>
    <scope>FUNCTION</scope>
    <scope>IDENTIFICATION IN THE TIM23 COMPLEX</scope>
    <scope>IDENTIFICATION IN MITRAC COMPLEX</scope>
</reference>
<reference key="5">
    <citation type="journal article" date="2015" name="Cell Rep.">
        <title>MITRAC7 acts as a COX1-specific chaperone and reveals a checkpoint during cytochrome c oxidase assembly.</title>
        <authorList>
            <person name="Dennerlein S."/>
            <person name="Oeljeklaus S."/>
            <person name="Jans D."/>
            <person name="Hellwig C."/>
            <person name="Bareth B."/>
            <person name="Jakobs S."/>
            <person name="Deckers M."/>
            <person name="Warscheid B."/>
            <person name="Rehling P."/>
        </authorList>
    </citation>
    <scope>INTERACTION WITH COA3 AND MT-CO1</scope>
</reference>
<reference key="6">
    <citation type="journal article" date="2015" name="Proteomics">
        <title>N-terminome analysis of the human mitochondrial proteome.</title>
        <authorList>
            <person name="Vaca Jacome A.S."/>
            <person name="Rabilloud T."/>
            <person name="Schaeffer-Reiss C."/>
            <person name="Rompais M."/>
            <person name="Ayoub D."/>
            <person name="Lane L."/>
            <person name="Bairoch A."/>
            <person name="Van Dorsselaer A."/>
            <person name="Carapito C."/>
        </authorList>
    </citation>
    <scope>IDENTIFICATION BY MASS SPECTROMETRY [LARGE SCALE ANALYSIS]</scope>
</reference>
<dbReference type="EMBL" id="AF161503">
    <property type="protein sequence ID" value="AAF29118.1"/>
    <property type="molecule type" value="mRNA"/>
</dbReference>
<dbReference type="EMBL" id="BC000892">
    <property type="protein sequence ID" value="AAH00892.1"/>
    <property type="molecule type" value="mRNA"/>
</dbReference>
<dbReference type="CCDS" id="CCDS12003.1"/>
<dbReference type="RefSeq" id="NP_054896.2">
    <property type="nucleotide sequence ID" value="NM_014177.3"/>
</dbReference>
<dbReference type="SMR" id="Q9BVV7"/>
<dbReference type="BioGRID" id="118859">
    <property type="interactions" value="50"/>
</dbReference>
<dbReference type="ComplexPortal" id="CPX-6129">
    <property type="entry name" value="TIM23 mitochondrial inner membrane pre-sequence translocase complex, TIM17A variant"/>
</dbReference>
<dbReference type="ComplexPortal" id="CPX-6130">
    <property type="entry name" value="TIM23 mitochondrial inner membrane pre-sequence translocase complex, TIM17B variant"/>
</dbReference>
<dbReference type="CORUM" id="Q9BVV7"/>
<dbReference type="FunCoup" id="Q9BVV7">
    <property type="interactions" value="772"/>
</dbReference>
<dbReference type="IntAct" id="Q9BVV7">
    <property type="interactions" value="29"/>
</dbReference>
<dbReference type="MINT" id="Q9BVV7"/>
<dbReference type="STRING" id="9606.ENSP00000169551"/>
<dbReference type="GlyCosmos" id="Q9BVV7">
    <property type="glycosylation" value="1 site, 1 glycan"/>
</dbReference>
<dbReference type="GlyGen" id="Q9BVV7">
    <property type="glycosylation" value="2 sites, 1 O-linked glycan (2 sites)"/>
</dbReference>
<dbReference type="iPTMnet" id="Q9BVV7"/>
<dbReference type="PhosphoSitePlus" id="Q9BVV7"/>
<dbReference type="SwissPalm" id="Q9BVV7"/>
<dbReference type="BioMuta" id="TIMM21"/>
<dbReference type="DMDM" id="73918912"/>
<dbReference type="jPOST" id="Q9BVV7"/>
<dbReference type="MassIVE" id="Q9BVV7"/>
<dbReference type="PaxDb" id="9606-ENSP00000169551"/>
<dbReference type="PeptideAtlas" id="Q9BVV7"/>
<dbReference type="ProteomicsDB" id="79238"/>
<dbReference type="Pumba" id="Q9BVV7"/>
<dbReference type="TopDownProteomics" id="Q9BVV7"/>
<dbReference type="Antibodypedia" id="2242">
    <property type="antibodies" value="46 antibodies from 17 providers"/>
</dbReference>
<dbReference type="DNASU" id="29090"/>
<dbReference type="Ensembl" id="ENST00000169551.11">
    <property type="protein sequence ID" value="ENSP00000169551.6"/>
    <property type="gene ID" value="ENSG00000075336.12"/>
</dbReference>
<dbReference type="GeneID" id="29090"/>
<dbReference type="KEGG" id="hsa:29090"/>
<dbReference type="MANE-Select" id="ENST00000169551.11">
    <property type="protein sequence ID" value="ENSP00000169551.6"/>
    <property type="RefSeq nucleotide sequence ID" value="NM_014177.3"/>
    <property type="RefSeq protein sequence ID" value="NP_054896.2"/>
</dbReference>
<dbReference type="UCSC" id="uc010dqr.2">
    <property type="organism name" value="human"/>
</dbReference>
<dbReference type="AGR" id="HGNC:25010"/>
<dbReference type="CTD" id="29090"/>
<dbReference type="DisGeNET" id="29090"/>
<dbReference type="GeneCards" id="TIMM21"/>
<dbReference type="HGNC" id="HGNC:25010">
    <property type="gene designation" value="TIMM21"/>
</dbReference>
<dbReference type="HPA" id="ENSG00000075336">
    <property type="expression patterns" value="Low tissue specificity"/>
</dbReference>
<dbReference type="MIM" id="615180">
    <property type="type" value="gene"/>
</dbReference>
<dbReference type="neXtProt" id="NX_Q9BVV7"/>
<dbReference type="OpenTargets" id="ENSG00000075336"/>
<dbReference type="PharmGKB" id="PA134897360"/>
<dbReference type="VEuPathDB" id="HostDB:ENSG00000075336"/>
<dbReference type="eggNOG" id="KOG4836">
    <property type="taxonomic scope" value="Eukaryota"/>
</dbReference>
<dbReference type="GeneTree" id="ENSGT00390000011552"/>
<dbReference type="HOGENOM" id="CLU_099476_0_0_1"/>
<dbReference type="InParanoid" id="Q9BVV7"/>
<dbReference type="OMA" id="HFHVEGP"/>
<dbReference type="OrthoDB" id="436405at2759"/>
<dbReference type="PAN-GO" id="Q9BVV7">
    <property type="GO annotations" value="2 GO annotations based on evolutionary models"/>
</dbReference>
<dbReference type="PhylomeDB" id="Q9BVV7"/>
<dbReference type="TreeFam" id="TF315067"/>
<dbReference type="PathwayCommons" id="Q9BVV7"/>
<dbReference type="Reactome" id="R-HSA-1268020">
    <property type="pathway name" value="Mitochondrial protein import"/>
</dbReference>
<dbReference type="Reactome" id="R-HSA-9864848">
    <property type="pathway name" value="Complex IV assembly"/>
</dbReference>
<dbReference type="SignaLink" id="Q9BVV7"/>
<dbReference type="SIGNOR" id="Q9BVV7"/>
<dbReference type="BioGRID-ORCS" id="29090">
    <property type="hits" value="11 hits in 1164 CRISPR screens"/>
</dbReference>
<dbReference type="ChiTaRS" id="TIMM21">
    <property type="organism name" value="human"/>
</dbReference>
<dbReference type="GenomeRNAi" id="29090"/>
<dbReference type="Pharos" id="Q9BVV7">
    <property type="development level" value="Tbio"/>
</dbReference>
<dbReference type="PRO" id="PR:Q9BVV7"/>
<dbReference type="Proteomes" id="UP000005640">
    <property type="component" value="Chromosome 18"/>
</dbReference>
<dbReference type="RNAct" id="Q9BVV7">
    <property type="molecule type" value="protein"/>
</dbReference>
<dbReference type="Bgee" id="ENSG00000075336">
    <property type="expression patterns" value="Expressed in left ventricle myocardium and 188 other cell types or tissues"/>
</dbReference>
<dbReference type="ExpressionAtlas" id="Q9BVV7">
    <property type="expression patterns" value="baseline and differential"/>
</dbReference>
<dbReference type="GO" id="GO:0005743">
    <property type="term" value="C:mitochondrial inner membrane"/>
    <property type="evidence" value="ECO:0000304"/>
    <property type="project" value="Reactome"/>
</dbReference>
<dbReference type="GO" id="GO:0005758">
    <property type="term" value="C:mitochondrial intermembrane space"/>
    <property type="evidence" value="ECO:0000304"/>
    <property type="project" value="Reactome"/>
</dbReference>
<dbReference type="GO" id="GO:0005739">
    <property type="term" value="C:mitochondrion"/>
    <property type="evidence" value="ECO:0006056"/>
    <property type="project" value="FlyBase"/>
</dbReference>
<dbReference type="GO" id="GO:0005744">
    <property type="term" value="C:TIM23 mitochondrial import inner membrane translocase complex"/>
    <property type="evidence" value="ECO:0000314"/>
    <property type="project" value="UniProtKB"/>
</dbReference>
<dbReference type="GO" id="GO:0006886">
    <property type="term" value="P:intracellular protein transport"/>
    <property type="evidence" value="ECO:0000303"/>
    <property type="project" value="ComplexPortal"/>
</dbReference>
<dbReference type="GO" id="GO:0033617">
    <property type="term" value="P:mitochondrial cytochrome c oxidase assembly"/>
    <property type="evidence" value="ECO:0000315"/>
    <property type="project" value="UniProtKB"/>
</dbReference>
<dbReference type="GO" id="GO:0032981">
    <property type="term" value="P:mitochondrial respiratory chain complex I assembly"/>
    <property type="evidence" value="ECO:0000315"/>
    <property type="project" value="UniProtKB"/>
</dbReference>
<dbReference type="GO" id="GO:0030150">
    <property type="term" value="P:protein import into mitochondrial matrix"/>
    <property type="evidence" value="ECO:0000315"/>
    <property type="project" value="UniProtKB"/>
</dbReference>
<dbReference type="FunFam" id="3.10.450.320:FF:000001">
    <property type="entry name" value="Mitochondrial import inner membrane translocase subunit Tim21"/>
    <property type="match status" value="1"/>
</dbReference>
<dbReference type="Gene3D" id="3.10.450.320">
    <property type="entry name" value="Mitochondrial import inner membrane translocase subunit Tim21"/>
    <property type="match status" value="1"/>
</dbReference>
<dbReference type="InterPro" id="IPR013261">
    <property type="entry name" value="Tim21"/>
</dbReference>
<dbReference type="InterPro" id="IPR038552">
    <property type="entry name" value="Tim21_IMS_sf"/>
</dbReference>
<dbReference type="PANTHER" id="PTHR13032">
    <property type="entry name" value="MITOCHONDRIAL IMPORT INNER MEMBRANE TRANSLOCASE SUBUNIT TIM21"/>
    <property type="match status" value="1"/>
</dbReference>
<dbReference type="PANTHER" id="PTHR13032:SF6">
    <property type="entry name" value="MITOCHONDRIAL IMPORT INNER MEMBRANE TRANSLOCASE SUBUNIT TIM21"/>
    <property type="match status" value="1"/>
</dbReference>
<dbReference type="Pfam" id="PF08294">
    <property type="entry name" value="TIM21"/>
    <property type="match status" value="1"/>
</dbReference>
<protein>
    <recommendedName>
        <fullName>Mitochondrial import inner membrane translocase subunit Tim21</fullName>
    </recommendedName>
    <alternativeName>
        <fullName>TIM21-like protein, mitochondrial</fullName>
    </alternativeName>
</protein>
<accession>Q9BVV7</accession>
<accession>Q9P010</accession>
<proteinExistence type="evidence at protein level"/>
<name>TIM21_HUMAN</name>
<sequence>MICTFLRAVQYTEKLHRSSAKRLLLPYIVLNKACLKTEPSLRCGLQYQKKTLRPRCILGVTQKTIWTQGPSPRKAKEDGSKQVSVHRSQRGGTAVPTSQKVKEAGRDFTYLIVVLFGISITGGLFYTIFKELFSSSSPSKIYGRALEKCRSHPEVIGVFGESVKGYGEVTRRGRRQHVRFTEYVKDGLKHTCVKFYIEGSEPGKQGTVYAQVKENPGSGEYDFRYIFVEIESYPRRTIIIEDNRSQDD</sequence>
<evidence type="ECO:0000255" key="1"/>
<evidence type="ECO:0000256" key="2">
    <source>
        <dbReference type="SAM" id="MobiDB-lite"/>
    </source>
</evidence>
<evidence type="ECO:0000269" key="3">
    <source>
    </source>
</evidence>
<evidence type="ECO:0000269" key="4">
    <source>
    </source>
</evidence>
<evidence type="ECO:0000305" key="5"/>
<evidence type="ECO:0000305" key="6">
    <source>
    </source>
</evidence>
<organism>
    <name type="scientific">Homo sapiens</name>
    <name type="common">Human</name>
    <dbReference type="NCBI Taxonomy" id="9606"/>
    <lineage>
        <taxon>Eukaryota</taxon>
        <taxon>Metazoa</taxon>
        <taxon>Chordata</taxon>
        <taxon>Craniata</taxon>
        <taxon>Vertebrata</taxon>
        <taxon>Euteleostomi</taxon>
        <taxon>Mammalia</taxon>
        <taxon>Eutheria</taxon>
        <taxon>Euarchontoglires</taxon>
        <taxon>Primates</taxon>
        <taxon>Haplorrhini</taxon>
        <taxon>Catarrhini</taxon>
        <taxon>Hominidae</taxon>
        <taxon>Homo</taxon>
    </lineage>
</organism>
<gene>
    <name type="primary">TIMM21</name>
    <name type="synonym">C18orf55</name>
    <name type="synonym">TIM21</name>
    <name type="ORF">HSPC154</name>
</gene>